<sequence>MSNVPAELKYSKEHEWLRKEADGTYTVGITEHAQELLGDMVFVDLPEVGATVSAGDDCAVAESVKAASDIYAPVSGEIVAVNDALSDSPELVNSEPYAGGWIFKIKASDESELESLLDATAYEALLEDE</sequence>
<evidence type="ECO:0000255" key="1">
    <source>
        <dbReference type="HAMAP-Rule" id="MF_00272"/>
    </source>
</evidence>
<evidence type="ECO:0000255" key="2">
    <source>
        <dbReference type="PROSITE-ProRule" id="PRU01066"/>
    </source>
</evidence>
<feature type="chain" id="PRO_1000204745" description="Glycine cleavage system H protein">
    <location>
        <begin position="1"/>
        <end position="129"/>
    </location>
</feature>
<feature type="domain" description="Lipoyl-binding" evidence="2">
    <location>
        <begin position="24"/>
        <end position="106"/>
    </location>
</feature>
<feature type="modified residue" description="N6-lipoyllysine" evidence="1">
    <location>
        <position position="65"/>
    </location>
</feature>
<keyword id="KW-0450">Lipoyl</keyword>
<proteinExistence type="inferred from homology"/>
<dbReference type="EMBL" id="CP001396">
    <property type="protein sequence ID" value="ACR63368.1"/>
    <property type="molecule type" value="Genomic_DNA"/>
</dbReference>
<dbReference type="RefSeq" id="WP_001295377.1">
    <property type="nucleotide sequence ID" value="NC_012759.1"/>
</dbReference>
<dbReference type="SMR" id="C5A0H6"/>
<dbReference type="GeneID" id="93779098"/>
<dbReference type="KEGG" id="ebw:BWG_2629"/>
<dbReference type="HOGENOM" id="CLU_097408_2_1_6"/>
<dbReference type="GO" id="GO:0005829">
    <property type="term" value="C:cytosol"/>
    <property type="evidence" value="ECO:0007669"/>
    <property type="project" value="TreeGrafter"/>
</dbReference>
<dbReference type="GO" id="GO:0005960">
    <property type="term" value="C:glycine cleavage complex"/>
    <property type="evidence" value="ECO:0007669"/>
    <property type="project" value="InterPro"/>
</dbReference>
<dbReference type="GO" id="GO:0019464">
    <property type="term" value="P:glycine decarboxylation via glycine cleavage system"/>
    <property type="evidence" value="ECO:0007669"/>
    <property type="project" value="UniProtKB-UniRule"/>
</dbReference>
<dbReference type="CDD" id="cd06848">
    <property type="entry name" value="GCS_H"/>
    <property type="match status" value="1"/>
</dbReference>
<dbReference type="FunFam" id="2.40.50.100:FF:000011">
    <property type="entry name" value="Glycine cleavage system H protein"/>
    <property type="match status" value="1"/>
</dbReference>
<dbReference type="Gene3D" id="2.40.50.100">
    <property type="match status" value="1"/>
</dbReference>
<dbReference type="HAMAP" id="MF_00272">
    <property type="entry name" value="GcvH"/>
    <property type="match status" value="1"/>
</dbReference>
<dbReference type="InterPro" id="IPR003016">
    <property type="entry name" value="2-oxoA_DH_lipoyl-BS"/>
</dbReference>
<dbReference type="InterPro" id="IPR000089">
    <property type="entry name" value="Biotin_lipoyl"/>
</dbReference>
<dbReference type="InterPro" id="IPR002930">
    <property type="entry name" value="GCV_H"/>
</dbReference>
<dbReference type="InterPro" id="IPR033753">
    <property type="entry name" value="GCV_H/Fam206"/>
</dbReference>
<dbReference type="InterPro" id="IPR017453">
    <property type="entry name" value="GCV_H_sub"/>
</dbReference>
<dbReference type="InterPro" id="IPR011053">
    <property type="entry name" value="Single_hybrid_motif"/>
</dbReference>
<dbReference type="NCBIfam" id="TIGR00527">
    <property type="entry name" value="gcvH"/>
    <property type="match status" value="1"/>
</dbReference>
<dbReference type="NCBIfam" id="NF002270">
    <property type="entry name" value="PRK01202.1"/>
    <property type="match status" value="1"/>
</dbReference>
<dbReference type="PANTHER" id="PTHR11715">
    <property type="entry name" value="GLYCINE CLEAVAGE SYSTEM H PROTEIN"/>
    <property type="match status" value="1"/>
</dbReference>
<dbReference type="PANTHER" id="PTHR11715:SF3">
    <property type="entry name" value="GLYCINE CLEAVAGE SYSTEM H PROTEIN-RELATED"/>
    <property type="match status" value="1"/>
</dbReference>
<dbReference type="Pfam" id="PF01597">
    <property type="entry name" value="GCV_H"/>
    <property type="match status" value="1"/>
</dbReference>
<dbReference type="SUPFAM" id="SSF51230">
    <property type="entry name" value="Single hybrid motif"/>
    <property type="match status" value="1"/>
</dbReference>
<dbReference type="PROSITE" id="PS50968">
    <property type="entry name" value="BIOTINYL_LIPOYL"/>
    <property type="match status" value="1"/>
</dbReference>
<dbReference type="PROSITE" id="PS00189">
    <property type="entry name" value="LIPOYL"/>
    <property type="match status" value="1"/>
</dbReference>
<accession>C5A0H6</accession>
<name>GCSH_ECOBW</name>
<organism>
    <name type="scientific">Escherichia coli (strain K12 / MC4100 / BW2952)</name>
    <dbReference type="NCBI Taxonomy" id="595496"/>
    <lineage>
        <taxon>Bacteria</taxon>
        <taxon>Pseudomonadati</taxon>
        <taxon>Pseudomonadota</taxon>
        <taxon>Gammaproteobacteria</taxon>
        <taxon>Enterobacterales</taxon>
        <taxon>Enterobacteriaceae</taxon>
        <taxon>Escherichia</taxon>
    </lineage>
</organism>
<reference key="1">
    <citation type="journal article" date="2009" name="J. Bacteriol.">
        <title>Genomic sequencing reveals regulatory mutations and recombinational events in the widely used MC4100 lineage of Escherichia coli K-12.</title>
        <authorList>
            <person name="Ferenci T."/>
            <person name="Zhou Z."/>
            <person name="Betteridge T."/>
            <person name="Ren Y."/>
            <person name="Liu Y."/>
            <person name="Feng L."/>
            <person name="Reeves P.R."/>
            <person name="Wang L."/>
        </authorList>
    </citation>
    <scope>NUCLEOTIDE SEQUENCE [LARGE SCALE GENOMIC DNA]</scope>
    <source>
        <strain>K12 / MC4100 / BW2952</strain>
    </source>
</reference>
<comment type="function">
    <text evidence="1">The glycine cleavage system catalyzes the degradation of glycine. The H protein shuttles the methylamine group of glycine from the P protein to the T protein.</text>
</comment>
<comment type="cofactor">
    <cofactor evidence="1">
        <name>(R)-lipoate</name>
        <dbReference type="ChEBI" id="CHEBI:83088"/>
    </cofactor>
    <text evidence="1">Binds 1 lipoyl cofactor covalently.</text>
</comment>
<comment type="subunit">
    <text evidence="1">The glycine cleavage system is composed of four proteins: P, T, L and H.</text>
</comment>
<comment type="similarity">
    <text evidence="1">Belongs to the GcvH family.</text>
</comment>
<protein>
    <recommendedName>
        <fullName evidence="1">Glycine cleavage system H protein</fullName>
    </recommendedName>
</protein>
<gene>
    <name evidence="1" type="primary">gcvH</name>
    <name type="ordered locus">BWG_2629</name>
</gene>